<proteinExistence type="inferred from homology"/>
<reference key="1">
    <citation type="journal article" date="2004" name="Nature">
        <title>Genome sequence of the Brown Norway rat yields insights into mammalian evolution.</title>
        <authorList>
            <person name="Gibbs R.A."/>
            <person name="Weinstock G.M."/>
            <person name="Metzker M.L."/>
            <person name="Muzny D.M."/>
            <person name="Sodergren E.J."/>
            <person name="Scherer S."/>
            <person name="Scott G."/>
            <person name="Steffen D."/>
            <person name="Worley K.C."/>
            <person name="Burch P.E."/>
            <person name="Okwuonu G."/>
            <person name="Hines S."/>
            <person name="Lewis L."/>
            <person name="Deramo C."/>
            <person name="Delgado O."/>
            <person name="Dugan-Rocha S."/>
            <person name="Miner G."/>
            <person name="Morgan M."/>
            <person name="Hawes A."/>
            <person name="Gill R."/>
            <person name="Holt R.A."/>
            <person name="Adams M.D."/>
            <person name="Amanatides P.G."/>
            <person name="Baden-Tillson H."/>
            <person name="Barnstead M."/>
            <person name="Chin S."/>
            <person name="Evans C.A."/>
            <person name="Ferriera S."/>
            <person name="Fosler C."/>
            <person name="Glodek A."/>
            <person name="Gu Z."/>
            <person name="Jennings D."/>
            <person name="Kraft C.L."/>
            <person name="Nguyen T."/>
            <person name="Pfannkoch C.M."/>
            <person name="Sitter C."/>
            <person name="Sutton G.G."/>
            <person name="Venter J.C."/>
            <person name="Woodage T."/>
            <person name="Smith D."/>
            <person name="Lee H.-M."/>
            <person name="Gustafson E."/>
            <person name="Cahill P."/>
            <person name="Kana A."/>
            <person name="Doucette-Stamm L."/>
            <person name="Weinstock K."/>
            <person name="Fechtel K."/>
            <person name="Weiss R.B."/>
            <person name="Dunn D.M."/>
            <person name="Green E.D."/>
            <person name="Blakesley R.W."/>
            <person name="Bouffard G.G."/>
            <person name="De Jong P.J."/>
            <person name="Osoegawa K."/>
            <person name="Zhu B."/>
            <person name="Marra M."/>
            <person name="Schein J."/>
            <person name="Bosdet I."/>
            <person name="Fjell C."/>
            <person name="Jones S."/>
            <person name="Krzywinski M."/>
            <person name="Mathewson C."/>
            <person name="Siddiqui A."/>
            <person name="Wye N."/>
            <person name="McPherson J."/>
            <person name="Zhao S."/>
            <person name="Fraser C.M."/>
            <person name="Shetty J."/>
            <person name="Shatsman S."/>
            <person name="Geer K."/>
            <person name="Chen Y."/>
            <person name="Abramzon S."/>
            <person name="Nierman W.C."/>
            <person name="Havlak P.H."/>
            <person name="Chen R."/>
            <person name="Durbin K.J."/>
            <person name="Egan A."/>
            <person name="Ren Y."/>
            <person name="Song X.-Z."/>
            <person name="Li B."/>
            <person name="Liu Y."/>
            <person name="Qin X."/>
            <person name="Cawley S."/>
            <person name="Cooney A.J."/>
            <person name="D'Souza L.M."/>
            <person name="Martin K."/>
            <person name="Wu J.Q."/>
            <person name="Gonzalez-Garay M.L."/>
            <person name="Jackson A.R."/>
            <person name="Kalafus K.J."/>
            <person name="McLeod M.P."/>
            <person name="Milosavljevic A."/>
            <person name="Virk D."/>
            <person name="Volkov A."/>
            <person name="Wheeler D.A."/>
            <person name="Zhang Z."/>
            <person name="Bailey J.A."/>
            <person name="Eichler E.E."/>
            <person name="Tuzun E."/>
            <person name="Birney E."/>
            <person name="Mongin E."/>
            <person name="Ureta-Vidal A."/>
            <person name="Woodwark C."/>
            <person name="Zdobnov E."/>
            <person name="Bork P."/>
            <person name="Suyama M."/>
            <person name="Torrents D."/>
            <person name="Alexandersson M."/>
            <person name="Trask B.J."/>
            <person name="Young J.M."/>
            <person name="Huang H."/>
            <person name="Wang H."/>
            <person name="Xing H."/>
            <person name="Daniels S."/>
            <person name="Gietzen D."/>
            <person name="Schmidt J."/>
            <person name="Stevens K."/>
            <person name="Vitt U."/>
            <person name="Wingrove J."/>
            <person name="Camara F."/>
            <person name="Mar Alba M."/>
            <person name="Abril J.F."/>
            <person name="Guigo R."/>
            <person name="Smit A."/>
            <person name="Dubchak I."/>
            <person name="Rubin E.M."/>
            <person name="Couronne O."/>
            <person name="Poliakov A."/>
            <person name="Huebner N."/>
            <person name="Ganten D."/>
            <person name="Goesele C."/>
            <person name="Hummel O."/>
            <person name="Kreitler T."/>
            <person name="Lee Y.-A."/>
            <person name="Monti J."/>
            <person name="Schulz H."/>
            <person name="Zimdahl H."/>
            <person name="Himmelbauer H."/>
            <person name="Lehrach H."/>
            <person name="Jacob H.J."/>
            <person name="Bromberg S."/>
            <person name="Gullings-Handley J."/>
            <person name="Jensen-Seaman M.I."/>
            <person name="Kwitek A.E."/>
            <person name="Lazar J."/>
            <person name="Pasko D."/>
            <person name="Tonellato P.J."/>
            <person name="Twigger S."/>
            <person name="Ponting C.P."/>
            <person name="Duarte J.M."/>
            <person name="Rice S."/>
            <person name="Goodstadt L."/>
            <person name="Beatson S.A."/>
            <person name="Emes R.D."/>
            <person name="Winter E.E."/>
            <person name="Webber C."/>
            <person name="Brandt P."/>
            <person name="Nyakatura G."/>
            <person name="Adetobi M."/>
            <person name="Chiaromonte F."/>
            <person name="Elnitski L."/>
            <person name="Eswara P."/>
            <person name="Hardison R.C."/>
            <person name="Hou M."/>
            <person name="Kolbe D."/>
            <person name="Makova K."/>
            <person name="Miller W."/>
            <person name="Nekrutenko A."/>
            <person name="Riemer C."/>
            <person name="Schwartz S."/>
            <person name="Taylor J."/>
            <person name="Yang S."/>
            <person name="Zhang Y."/>
            <person name="Lindpaintner K."/>
            <person name="Andrews T.D."/>
            <person name="Caccamo M."/>
            <person name="Clamp M."/>
            <person name="Clarke L."/>
            <person name="Curwen V."/>
            <person name="Durbin R.M."/>
            <person name="Eyras E."/>
            <person name="Searle S.M."/>
            <person name="Cooper G.M."/>
            <person name="Batzoglou S."/>
            <person name="Brudno M."/>
            <person name="Sidow A."/>
            <person name="Stone E.A."/>
            <person name="Payseur B.A."/>
            <person name="Bourque G."/>
            <person name="Lopez-Otin C."/>
            <person name="Puente X.S."/>
            <person name="Chakrabarti K."/>
            <person name="Chatterji S."/>
            <person name="Dewey C."/>
            <person name="Pachter L."/>
            <person name="Bray N."/>
            <person name="Yap V.B."/>
            <person name="Caspi A."/>
            <person name="Tesler G."/>
            <person name="Pevzner P.A."/>
            <person name="Haussler D."/>
            <person name="Roskin K.M."/>
            <person name="Baertsch R."/>
            <person name="Clawson H."/>
            <person name="Furey T.S."/>
            <person name="Hinrichs A.S."/>
            <person name="Karolchik D."/>
            <person name="Kent W.J."/>
            <person name="Rosenbloom K.R."/>
            <person name="Trumbower H."/>
            <person name="Weirauch M."/>
            <person name="Cooper D.N."/>
            <person name="Stenson P.D."/>
            <person name="Ma B."/>
            <person name="Brent M."/>
            <person name="Arumugam M."/>
            <person name="Shteynberg D."/>
            <person name="Copley R.R."/>
            <person name="Taylor M.S."/>
            <person name="Riethman H."/>
            <person name="Mudunuri U."/>
            <person name="Peterson J."/>
            <person name="Guyer M."/>
            <person name="Felsenfeld A."/>
            <person name="Old S."/>
            <person name="Mockrin S."/>
            <person name="Collins F.S."/>
        </authorList>
    </citation>
    <scope>NUCLEOTIDE SEQUENCE [LARGE SCALE GENOMIC DNA]</scope>
    <source>
        <strain>Brown Norway</strain>
    </source>
</reference>
<protein>
    <recommendedName>
        <fullName>WW domain binding protein 1-like</fullName>
    </recommendedName>
    <alternativeName>
        <fullName>Outcome predictor in acute leukemia 1 homolog</fullName>
    </alternativeName>
</protein>
<feature type="chain" id="PRO_0000241452" description="WW domain binding protein 1-like">
    <location>
        <begin position="1"/>
        <end position="344"/>
    </location>
</feature>
<feature type="transmembrane region" description="Helical" evidence="2">
    <location>
        <begin position="42"/>
        <end position="62"/>
    </location>
</feature>
<feature type="region of interest" description="Disordered" evidence="3">
    <location>
        <begin position="132"/>
        <end position="250"/>
    </location>
</feature>
<feature type="region of interest" description="Disordered" evidence="3">
    <location>
        <begin position="302"/>
        <end position="321"/>
    </location>
</feature>
<feature type="compositionally biased region" description="Low complexity" evidence="3">
    <location>
        <begin position="145"/>
        <end position="173"/>
    </location>
</feature>
<feature type="compositionally biased region" description="Basic and acidic residues" evidence="3">
    <location>
        <begin position="212"/>
        <end position="228"/>
    </location>
</feature>
<feature type="modified residue" description="Phosphoserine" evidence="1">
    <location>
        <position position="173"/>
    </location>
</feature>
<gene>
    <name type="primary">Wbp1l</name>
    <name type="synonym">Opal1</name>
</gene>
<sequence length="344" mass="37984">MPFLWGLRQDKEACVGTNNQSYICDTGHCCGQAQCCSHYYELWWFWLVWTIIIILSCCCVCHHRRAKHRLQAQQRQHEINLIAYREAHNYSALPFYFRFLPNYLLPPYEEVVNRPPTPPPPYSAFQLQQQQLLPPQGGPAGGSPPGADQPQGSQGAQSSPLSGPSRSSTRPPSVADPQSLEVPTERAATKALGMESSSSVASHGELDPGAFLDRDSECKEELLKDSSSEHGGAPPDSKDKTPGRHRRFTGDSGIEVCVCNRGHHDDDLKEFNTLIDDALDGPLDFCDSCHVRPPVDEEEGLCLSSEGQAREHGHPHLPRPPACLLLNTINEQDSPNSQRSSSPS</sequence>
<evidence type="ECO:0000250" key="1">
    <source>
        <dbReference type="UniProtKB" id="Q9NX94"/>
    </source>
</evidence>
<evidence type="ECO:0000255" key="2"/>
<evidence type="ECO:0000256" key="3">
    <source>
        <dbReference type="SAM" id="MobiDB-lite"/>
    </source>
</evidence>
<evidence type="ECO:0000305" key="4"/>
<organism>
    <name type="scientific">Rattus norvegicus</name>
    <name type="common">Rat</name>
    <dbReference type="NCBI Taxonomy" id="10116"/>
    <lineage>
        <taxon>Eukaryota</taxon>
        <taxon>Metazoa</taxon>
        <taxon>Chordata</taxon>
        <taxon>Craniata</taxon>
        <taxon>Vertebrata</taxon>
        <taxon>Euteleostomi</taxon>
        <taxon>Mammalia</taxon>
        <taxon>Eutheria</taxon>
        <taxon>Euarchontoglires</taxon>
        <taxon>Glires</taxon>
        <taxon>Rodentia</taxon>
        <taxon>Myomorpha</taxon>
        <taxon>Muroidea</taxon>
        <taxon>Muridae</taxon>
        <taxon>Murinae</taxon>
        <taxon>Rattus</taxon>
    </lineage>
</organism>
<name>WBP1L_RAT</name>
<comment type="subcellular location">
    <subcellularLocation>
        <location evidence="4">Membrane</location>
        <topology evidence="4">Single-pass membrane protein</topology>
    </subcellularLocation>
</comment>
<dbReference type="EMBL" id="AABR03000784">
    <property type="status" value="NOT_ANNOTATED_CDS"/>
    <property type="molecule type" value="Genomic_DNA"/>
</dbReference>
<dbReference type="RefSeq" id="XP_006231570.1">
    <property type="nucleotide sequence ID" value="XM_006231508.5"/>
</dbReference>
<dbReference type="FunCoup" id="P0C1G7">
    <property type="interactions" value="964"/>
</dbReference>
<dbReference type="STRING" id="10116.ENSRNOP00000027118"/>
<dbReference type="GlyGen" id="P0C1G7">
    <property type="glycosylation" value="1 site"/>
</dbReference>
<dbReference type="PhosphoSitePlus" id="P0C1G7"/>
<dbReference type="PaxDb" id="10116-ENSRNOP00000027118"/>
<dbReference type="GeneID" id="309456"/>
<dbReference type="UCSC" id="RGD:1305793">
    <property type="organism name" value="rat"/>
</dbReference>
<dbReference type="AGR" id="RGD:1305793"/>
<dbReference type="CTD" id="54838"/>
<dbReference type="RGD" id="1305793">
    <property type="gene designation" value="Wbp1l"/>
</dbReference>
<dbReference type="eggNOG" id="ENOG502QQBJ">
    <property type="taxonomic scope" value="Eukaryota"/>
</dbReference>
<dbReference type="InParanoid" id="P0C1G7"/>
<dbReference type="OrthoDB" id="10070083at2759"/>
<dbReference type="PRO" id="PR:P0C1G7"/>
<dbReference type="Proteomes" id="UP000002494">
    <property type="component" value="Unplaced"/>
</dbReference>
<dbReference type="GO" id="GO:0016020">
    <property type="term" value="C:membrane"/>
    <property type="evidence" value="ECO:0007669"/>
    <property type="project" value="UniProtKB-SubCell"/>
</dbReference>
<dbReference type="GO" id="GO:0031625">
    <property type="term" value="F:ubiquitin protein ligase binding"/>
    <property type="evidence" value="ECO:0000266"/>
    <property type="project" value="RGD"/>
</dbReference>
<dbReference type="GO" id="GO:0038160">
    <property type="term" value="P:CXCL12-activated CXCR4 signaling pathway"/>
    <property type="evidence" value="ECO:0000266"/>
    <property type="project" value="RGD"/>
</dbReference>
<dbReference type="GO" id="GO:0030097">
    <property type="term" value="P:hemopoiesis"/>
    <property type="evidence" value="ECO:0000266"/>
    <property type="project" value="RGD"/>
</dbReference>
<dbReference type="GO" id="GO:0031398">
    <property type="term" value="P:positive regulation of protein ubiquitination"/>
    <property type="evidence" value="ECO:0000266"/>
    <property type="project" value="RGD"/>
</dbReference>
<dbReference type="InterPro" id="IPR021684">
    <property type="entry name" value="WBP1-like"/>
</dbReference>
<dbReference type="InterPro" id="IPR051994">
    <property type="entry name" value="WW_domain-binding"/>
</dbReference>
<dbReference type="PANTHER" id="PTHR16209">
    <property type="entry name" value="VESICULAR, OVEREXPRESSED IN CANCER, PROSURVIVAL PROTEIN 1"/>
    <property type="match status" value="1"/>
</dbReference>
<dbReference type="PANTHER" id="PTHR16209:SF4">
    <property type="entry name" value="WW DOMAIN BINDING PROTEIN 1-LIKE"/>
    <property type="match status" value="1"/>
</dbReference>
<dbReference type="Pfam" id="PF11669">
    <property type="entry name" value="WBP-1"/>
    <property type="match status" value="1"/>
</dbReference>
<accession>P0C1G7</accession>
<keyword id="KW-0472">Membrane</keyword>
<keyword id="KW-0597">Phosphoprotein</keyword>
<keyword id="KW-1185">Reference proteome</keyword>
<keyword id="KW-0812">Transmembrane</keyword>
<keyword id="KW-1133">Transmembrane helix</keyword>